<evidence type="ECO:0000255" key="1">
    <source>
        <dbReference type="HAMAP-Rule" id="MF_00808"/>
    </source>
</evidence>
<sequence length="35" mass="4122">MEALVYTFLLVSTLGIIFFAIFFREPPKIQTKKMK</sequence>
<comment type="function">
    <text evidence="1">Found at the monomer-monomer interface of the photosystem II (PS II) dimer, plays a role in assembly and dimerization of PSII. PSII is a light-driven water plastoquinone oxidoreductase, using light energy to abstract electrons from H(2)O, generating a proton gradient subsequently used for ATP formation.</text>
</comment>
<comment type="subunit">
    <text evidence="1">PSII is composed of 1 copy each of membrane proteins PsbA, PsbB, PsbC, PsbD, PsbE, PsbF, PsbH, PsbI, PsbJ, PsbK, PsbL, PsbM, PsbT, PsbY, PsbZ, Psb30/Ycf12, at least 3 peripheral proteins of the oxygen-evolving complex and a large number of cofactors. It forms dimeric complexes.</text>
</comment>
<comment type="subcellular location">
    <subcellularLocation>
        <location evidence="1">Plastid</location>
        <location evidence="1">Chloroplast thylakoid membrane</location>
        <topology evidence="1">Single-pass membrane protein</topology>
    </subcellularLocation>
</comment>
<comment type="similarity">
    <text evidence="1">Belongs to the PsbT family.</text>
</comment>
<organism>
    <name type="scientific">Suaeda aralocaspica</name>
    <name type="common">Seablite</name>
    <name type="synonym">Borszczowia aralocaspica</name>
    <dbReference type="NCBI Taxonomy" id="224144"/>
    <lineage>
        <taxon>Eukaryota</taxon>
        <taxon>Viridiplantae</taxon>
        <taxon>Streptophyta</taxon>
        <taxon>Embryophyta</taxon>
        <taxon>Tracheophyta</taxon>
        <taxon>Spermatophyta</taxon>
        <taxon>Magnoliopsida</taxon>
        <taxon>eudicotyledons</taxon>
        <taxon>Gunneridae</taxon>
        <taxon>Pentapetalae</taxon>
        <taxon>Caryophyllales</taxon>
        <taxon>Chenopodiaceae</taxon>
        <taxon>Suaedoideae</taxon>
        <taxon>Suaeda</taxon>
    </lineage>
</organism>
<gene>
    <name evidence="1" type="primary">psbT</name>
</gene>
<dbReference type="EMBL" id="AY181934">
    <property type="protein sequence ID" value="AAO66160.1"/>
    <property type="molecule type" value="Genomic_DNA"/>
</dbReference>
<dbReference type="SMR" id="Q7YNI1"/>
<dbReference type="GO" id="GO:0009535">
    <property type="term" value="C:chloroplast thylakoid membrane"/>
    <property type="evidence" value="ECO:0007669"/>
    <property type="project" value="UniProtKB-SubCell"/>
</dbReference>
<dbReference type="GO" id="GO:0009539">
    <property type="term" value="C:photosystem II reaction center"/>
    <property type="evidence" value="ECO:0007669"/>
    <property type="project" value="InterPro"/>
</dbReference>
<dbReference type="GO" id="GO:0015979">
    <property type="term" value="P:photosynthesis"/>
    <property type="evidence" value="ECO:0007669"/>
    <property type="project" value="UniProtKB-UniRule"/>
</dbReference>
<dbReference type="HAMAP" id="MF_00808">
    <property type="entry name" value="PSII_PsbT"/>
    <property type="match status" value="1"/>
</dbReference>
<dbReference type="InterPro" id="IPR001743">
    <property type="entry name" value="PSII_PsbT"/>
</dbReference>
<dbReference type="InterPro" id="IPR037268">
    <property type="entry name" value="PSII_PsbT_sf"/>
</dbReference>
<dbReference type="PANTHER" id="PTHR36411">
    <property type="match status" value="1"/>
</dbReference>
<dbReference type="PANTHER" id="PTHR36411:SF2">
    <property type="entry name" value="PHOTOSYSTEM II REACTION CENTER PROTEIN T"/>
    <property type="match status" value="1"/>
</dbReference>
<dbReference type="Pfam" id="PF01405">
    <property type="entry name" value="PsbT"/>
    <property type="match status" value="1"/>
</dbReference>
<dbReference type="SUPFAM" id="SSF161029">
    <property type="entry name" value="Photosystem II reaction center protein T, PsbT"/>
    <property type="match status" value="1"/>
</dbReference>
<feature type="chain" id="PRO_0000217906" description="Photosystem II reaction center protein T">
    <location>
        <begin position="1"/>
        <end position="35"/>
    </location>
</feature>
<feature type="transmembrane region" description="Helical" evidence="1">
    <location>
        <begin position="3"/>
        <end position="23"/>
    </location>
</feature>
<reference key="1">
    <citation type="journal article" date="2003" name="Plant Syst. Evol.">
        <title>An integrated molecular and morphological study of the subfamily Suaedoideae Ulbr. (Chenopodiaceae).</title>
        <authorList>
            <person name="Schuetze P."/>
            <person name="Freitag H."/>
            <person name="Weising K."/>
        </authorList>
    </citation>
    <scope>NUCLEOTIDE SEQUENCE [GENOMIC DNA]</scope>
</reference>
<accession>Q7YNI1</accession>
<keyword id="KW-0150">Chloroplast</keyword>
<keyword id="KW-0472">Membrane</keyword>
<keyword id="KW-0602">Photosynthesis</keyword>
<keyword id="KW-0604">Photosystem II</keyword>
<keyword id="KW-0934">Plastid</keyword>
<keyword id="KW-0793">Thylakoid</keyword>
<keyword id="KW-0812">Transmembrane</keyword>
<keyword id="KW-1133">Transmembrane helix</keyword>
<protein>
    <recommendedName>
        <fullName evidence="1">Photosystem II reaction center protein T</fullName>
        <shortName evidence="1">PSII-T</shortName>
    </recommendedName>
</protein>
<geneLocation type="chloroplast"/>
<proteinExistence type="inferred from homology"/>
<name>PSBT_SUAAR</name>